<name>BIOW_META3</name>
<proteinExistence type="inferred from homology"/>
<keyword id="KW-0067">ATP-binding</keyword>
<keyword id="KW-0093">Biotin biosynthesis</keyword>
<keyword id="KW-0436">Ligase</keyword>
<keyword id="KW-0460">Magnesium</keyword>
<keyword id="KW-0547">Nucleotide-binding</keyword>
<accession>A6UWX4</accession>
<sequence length="236" mass="26531">MAFSIKMRASKGDKHISGAETIVMEKENIENITAGYIKRALEHELGAPDFINIKIDKINKKDIIYIDALPIKTINCKNKEDARRVAKNLLKNEGISDKLIEKSFKIIDDGGMRGAPILNLNGERLEPDKERGVRVKNISTTEELKEKILKNNIGTDRTVDAIAIASKVINLGVIAELCTSDNNSYTTGYVATKNGYFRITNLKQENENGGRVFFVKNDTNIEDLIYKLENKPYIIK</sequence>
<reference key="1">
    <citation type="submission" date="2007-06" db="EMBL/GenBank/DDBJ databases">
        <title>Complete sequence of Methanococcus aeolicus Nankai-3.</title>
        <authorList>
            <consortium name="US DOE Joint Genome Institute"/>
            <person name="Copeland A."/>
            <person name="Lucas S."/>
            <person name="Lapidus A."/>
            <person name="Barry K."/>
            <person name="Glavina del Rio T."/>
            <person name="Dalin E."/>
            <person name="Tice H."/>
            <person name="Pitluck S."/>
            <person name="Chain P."/>
            <person name="Malfatti S."/>
            <person name="Shin M."/>
            <person name="Vergez L."/>
            <person name="Schmutz J."/>
            <person name="Larimer F."/>
            <person name="Land M."/>
            <person name="Hauser L."/>
            <person name="Kyrpides N."/>
            <person name="Lykidis A."/>
            <person name="Sieprawska-Lupa M."/>
            <person name="Whitman W.B."/>
            <person name="Richardson P."/>
        </authorList>
    </citation>
    <scope>NUCLEOTIDE SEQUENCE [LARGE SCALE GENOMIC DNA]</scope>
    <source>
        <strain>ATCC BAA-1280 / DSM 17508 / OCM 812 / Nankai-3</strain>
    </source>
</reference>
<evidence type="ECO:0000255" key="1">
    <source>
        <dbReference type="HAMAP-Rule" id="MF_00668"/>
    </source>
</evidence>
<feature type="chain" id="PRO_0000412098" description="6-carboxyhexanoate--CoA ligase">
    <location>
        <begin position="1"/>
        <end position="236"/>
    </location>
</feature>
<protein>
    <recommendedName>
        <fullName evidence="1">6-carboxyhexanoate--CoA ligase</fullName>
        <ecNumber evidence="1">6.2.1.14</ecNumber>
    </recommendedName>
    <alternativeName>
        <fullName evidence="1">Pimeloyl-CoA synthase</fullName>
    </alternativeName>
</protein>
<gene>
    <name evidence="1" type="primary">bioW</name>
    <name type="ordered locus">Maeo_1420</name>
</gene>
<organism>
    <name type="scientific">Methanococcus aeolicus (strain ATCC BAA-1280 / DSM 17508 / OCM 812 / Nankai-3)</name>
    <dbReference type="NCBI Taxonomy" id="419665"/>
    <lineage>
        <taxon>Archaea</taxon>
        <taxon>Methanobacteriati</taxon>
        <taxon>Methanobacteriota</taxon>
        <taxon>Methanomada group</taxon>
        <taxon>Methanococci</taxon>
        <taxon>Methanococcales</taxon>
        <taxon>Methanococcaceae</taxon>
        <taxon>Methanococcus</taxon>
    </lineage>
</organism>
<dbReference type="EC" id="6.2.1.14" evidence="1"/>
<dbReference type="EMBL" id="CP000743">
    <property type="protein sequence ID" value="ABR56996.1"/>
    <property type="molecule type" value="Genomic_DNA"/>
</dbReference>
<dbReference type="RefSeq" id="WP_011974128.1">
    <property type="nucleotide sequence ID" value="NC_009635.1"/>
</dbReference>
<dbReference type="SMR" id="A6UWX4"/>
<dbReference type="STRING" id="419665.Maeo_1420"/>
<dbReference type="GeneID" id="5326682"/>
<dbReference type="KEGG" id="mae:Maeo_1420"/>
<dbReference type="eggNOG" id="arCOG05075">
    <property type="taxonomic scope" value="Archaea"/>
</dbReference>
<dbReference type="HOGENOM" id="CLU_076858_0_0_2"/>
<dbReference type="OrthoDB" id="65815at2157"/>
<dbReference type="UniPathway" id="UPA00999">
    <property type="reaction ID" value="UER00351"/>
</dbReference>
<dbReference type="Proteomes" id="UP000001106">
    <property type="component" value="Chromosome"/>
</dbReference>
<dbReference type="GO" id="GO:0042410">
    <property type="term" value="F:6-carboxyhexanoate-CoA ligase activity"/>
    <property type="evidence" value="ECO:0007669"/>
    <property type="project" value="UniProtKB-UniRule"/>
</dbReference>
<dbReference type="GO" id="GO:0005524">
    <property type="term" value="F:ATP binding"/>
    <property type="evidence" value="ECO:0007669"/>
    <property type="project" value="UniProtKB-KW"/>
</dbReference>
<dbReference type="GO" id="GO:0000287">
    <property type="term" value="F:magnesium ion binding"/>
    <property type="evidence" value="ECO:0007669"/>
    <property type="project" value="UniProtKB-UniRule"/>
</dbReference>
<dbReference type="GO" id="GO:0009102">
    <property type="term" value="P:biotin biosynthetic process"/>
    <property type="evidence" value="ECO:0007669"/>
    <property type="project" value="UniProtKB-UniRule"/>
</dbReference>
<dbReference type="HAMAP" id="MF_00668">
    <property type="entry name" value="BioW"/>
    <property type="match status" value="1"/>
</dbReference>
<dbReference type="InterPro" id="IPR005499">
    <property type="entry name" value="BioW"/>
</dbReference>
<dbReference type="NCBIfam" id="TIGR01204">
    <property type="entry name" value="bioW"/>
    <property type="match status" value="1"/>
</dbReference>
<dbReference type="NCBIfam" id="NF002360">
    <property type="entry name" value="PRK01322.1"/>
    <property type="match status" value="1"/>
</dbReference>
<dbReference type="Pfam" id="PF03744">
    <property type="entry name" value="BioW"/>
    <property type="match status" value="1"/>
</dbReference>
<comment type="function">
    <text evidence="1">Catalyzes the transformation of pimelate into pimeloyl-CoA with concomitant hydrolysis of ATP to AMP.</text>
</comment>
<comment type="catalytic activity">
    <reaction evidence="1">
        <text>heptanedioate + ATP + CoA = 6-carboxyhexanoyl-CoA + AMP + diphosphate</text>
        <dbReference type="Rhea" id="RHEA:14781"/>
        <dbReference type="ChEBI" id="CHEBI:30616"/>
        <dbReference type="ChEBI" id="CHEBI:33019"/>
        <dbReference type="ChEBI" id="CHEBI:36165"/>
        <dbReference type="ChEBI" id="CHEBI:57287"/>
        <dbReference type="ChEBI" id="CHEBI:57360"/>
        <dbReference type="ChEBI" id="CHEBI:456215"/>
        <dbReference type="EC" id="6.2.1.14"/>
    </reaction>
</comment>
<comment type="cofactor">
    <cofactor evidence="1">
        <name>Mg(2+)</name>
        <dbReference type="ChEBI" id="CHEBI:18420"/>
    </cofactor>
</comment>
<comment type="pathway">
    <text evidence="1">Metabolic intermediate metabolism; pimeloyl-CoA biosynthesis; pimeloyl-CoA from pimelate: step 1/1.</text>
</comment>
<comment type="subunit">
    <text evidence="1">Homodimer.</text>
</comment>
<comment type="similarity">
    <text evidence="1">Belongs to the BioW family.</text>
</comment>